<organism>
    <name type="scientific">Cavia porcellus</name>
    <name type="common">Guinea pig</name>
    <dbReference type="NCBI Taxonomy" id="10141"/>
    <lineage>
        <taxon>Eukaryota</taxon>
        <taxon>Metazoa</taxon>
        <taxon>Chordata</taxon>
        <taxon>Craniata</taxon>
        <taxon>Vertebrata</taxon>
        <taxon>Euteleostomi</taxon>
        <taxon>Mammalia</taxon>
        <taxon>Eutheria</taxon>
        <taxon>Euarchontoglires</taxon>
        <taxon>Glires</taxon>
        <taxon>Rodentia</taxon>
        <taxon>Hystricomorpha</taxon>
        <taxon>Caviidae</taxon>
        <taxon>Cavia</taxon>
    </lineage>
</organism>
<accession>P30547</accession>
<sequence>MDNVLPVDSDLFPNISTNTSEPNQFVQPAWQIVLWAAAYTVIVVTSVVGNVVVMWIILAHKRMRTVTNYFLVNLAFAEASMAAFNTVVNFTYAVHNEWYYGLFYCKFHNFFPIAAVFASIYSMTAVAFDRYMAIIHPLQPRLSATATKVVICVIWVLALLLAFPQGYYSTTETMPGRVVCMIEWPSHPDKIYEKVYHICVTVLIYFLPLLVIGYAYTVVGITLWASEIPGDSSDRYHEQVSAKRKVVKMMIVVVCTFAICWLPFHIFFLLPYINPDLYLKKFIQQVYLAIMWLAMSSTMYNPIIYCCLNDRFRLGFKHAFRCCPFISAADYEGLEMKSTRYFQTQGSVYKVSRLETTISTVVGAHEEDPEEGPKATPSSLDLTSNGSSRSNSKTVTESSSFYSNMLS</sequence>
<comment type="function">
    <text>This is a receptor for the tachykinin neuropeptide substance P. It is probably associated with G proteins that activate a phosphatidylinositol-calcium second messenger system. The rank order of affinity of this receptor to tachykinins is: substance P &gt; substance K &gt; neuromedin-K.</text>
</comment>
<comment type="subunit">
    <text evidence="1">Interacts with ARRB1.</text>
</comment>
<comment type="subcellular location">
    <subcellularLocation>
        <location>Cell membrane</location>
        <topology>Multi-pass membrane protein</topology>
    </subcellularLocation>
</comment>
<comment type="similarity">
    <text evidence="3">Belongs to the G-protein coupled receptor 1 family.</text>
</comment>
<gene>
    <name type="primary">TACR1</name>
    <name type="synonym">TAC1R</name>
</gene>
<evidence type="ECO:0000250" key="1"/>
<evidence type="ECO:0000255" key="2"/>
<evidence type="ECO:0000255" key="3">
    <source>
        <dbReference type="PROSITE-ProRule" id="PRU00521"/>
    </source>
</evidence>
<evidence type="ECO:0000256" key="4">
    <source>
        <dbReference type="SAM" id="MobiDB-lite"/>
    </source>
</evidence>
<proteinExistence type="evidence at transcript level"/>
<feature type="chain" id="PRO_0000069884" description="Substance-P receptor">
    <location>
        <begin position="1"/>
        <end position="407"/>
    </location>
</feature>
<feature type="topological domain" description="Extracellular" evidence="2">
    <location>
        <begin position="1"/>
        <end position="31"/>
    </location>
</feature>
<feature type="transmembrane region" description="Helical; Name=1" evidence="2">
    <location>
        <begin position="32"/>
        <end position="54"/>
    </location>
</feature>
<feature type="topological domain" description="Cytoplasmic" evidence="2">
    <location>
        <begin position="55"/>
        <end position="64"/>
    </location>
</feature>
<feature type="transmembrane region" description="Helical; Name=2" evidence="2">
    <location>
        <begin position="65"/>
        <end position="86"/>
    </location>
</feature>
<feature type="topological domain" description="Extracellular" evidence="2">
    <location>
        <begin position="87"/>
        <end position="106"/>
    </location>
</feature>
<feature type="transmembrane region" description="Helical; Name=3" evidence="2">
    <location>
        <begin position="107"/>
        <end position="128"/>
    </location>
</feature>
<feature type="topological domain" description="Cytoplasmic" evidence="2">
    <location>
        <begin position="129"/>
        <end position="148"/>
    </location>
</feature>
<feature type="transmembrane region" description="Helical; Name=4" evidence="2">
    <location>
        <begin position="149"/>
        <end position="169"/>
    </location>
</feature>
<feature type="topological domain" description="Extracellular" evidence="2">
    <location>
        <begin position="170"/>
        <end position="194"/>
    </location>
</feature>
<feature type="transmembrane region" description="Helical; Name=5" evidence="2">
    <location>
        <begin position="195"/>
        <end position="219"/>
    </location>
</feature>
<feature type="topological domain" description="Cytoplasmic" evidence="2">
    <location>
        <begin position="220"/>
        <end position="248"/>
    </location>
</feature>
<feature type="transmembrane region" description="Helical; Name=6" evidence="2">
    <location>
        <begin position="249"/>
        <end position="270"/>
    </location>
</feature>
<feature type="topological domain" description="Extracellular" evidence="2">
    <location>
        <begin position="271"/>
        <end position="283"/>
    </location>
</feature>
<feature type="transmembrane region" description="Helical; Name=7" evidence="2">
    <location>
        <begin position="284"/>
        <end position="308"/>
    </location>
</feature>
<feature type="topological domain" description="Cytoplasmic" evidence="2">
    <location>
        <begin position="309"/>
        <end position="407"/>
    </location>
</feature>
<feature type="region of interest" description="Disordered" evidence="4">
    <location>
        <begin position="363"/>
        <end position="407"/>
    </location>
</feature>
<feature type="compositionally biased region" description="Polar residues" evidence="4">
    <location>
        <begin position="376"/>
        <end position="407"/>
    </location>
</feature>
<feature type="lipid moiety-binding region" description="S-palmitoyl cysteine" evidence="2">
    <location>
        <position position="322"/>
    </location>
</feature>
<feature type="glycosylation site" description="N-linked (GlcNAc...) asparagine" evidence="2">
    <location>
        <position position="14"/>
    </location>
</feature>
<feature type="glycosylation site" description="N-linked (GlcNAc...) asparagine" evidence="2">
    <location>
        <position position="18"/>
    </location>
</feature>
<feature type="disulfide bond" evidence="3">
    <location>
        <begin position="105"/>
        <end position="180"/>
    </location>
</feature>
<name>NK1R_CAVPO</name>
<protein>
    <recommendedName>
        <fullName>Substance-P receptor</fullName>
        <shortName>SPR</shortName>
    </recommendedName>
    <alternativeName>
        <fullName>NK-1 receptor</fullName>
        <shortName>NK-1R</shortName>
    </alternativeName>
    <alternativeName>
        <fullName>Tachykinin receptor 1</fullName>
    </alternativeName>
</protein>
<dbReference type="EMBL" id="X64323">
    <property type="protein sequence ID" value="CAA45608.1"/>
    <property type="molecule type" value="mRNA"/>
</dbReference>
<dbReference type="PIR" id="S23510">
    <property type="entry name" value="S23510"/>
</dbReference>
<dbReference type="RefSeq" id="NP_001166332.1">
    <property type="nucleotide sequence ID" value="NM_001172861.1"/>
</dbReference>
<dbReference type="RefSeq" id="XP_013006930.1">
    <property type="nucleotide sequence ID" value="XM_013151476.1"/>
</dbReference>
<dbReference type="SMR" id="P30547"/>
<dbReference type="FunCoup" id="P30547">
    <property type="interactions" value="614"/>
</dbReference>
<dbReference type="STRING" id="10141.ENSCPOP00000030949"/>
<dbReference type="BindingDB" id="P30547"/>
<dbReference type="ChEMBL" id="CHEMBL3942"/>
<dbReference type="GlyCosmos" id="P30547">
    <property type="glycosylation" value="2 sites, No reported glycans"/>
</dbReference>
<dbReference type="Ensembl" id="ENSCPOT00000046226.1">
    <property type="protein sequence ID" value="ENSCPOP00000030949.1"/>
    <property type="gene ID" value="ENSCPOG00000036008.1"/>
</dbReference>
<dbReference type="GeneID" id="100135626"/>
<dbReference type="KEGG" id="cpoc:100135626"/>
<dbReference type="CTD" id="6869"/>
<dbReference type="VEuPathDB" id="HostDB:ENSCPOG00000036008"/>
<dbReference type="eggNOG" id="KOG4219">
    <property type="taxonomic scope" value="Eukaryota"/>
</dbReference>
<dbReference type="GeneTree" id="ENSGT00940000153745"/>
<dbReference type="InParanoid" id="P30547"/>
<dbReference type="OMA" id="CMIKWPE"/>
<dbReference type="OrthoDB" id="5981855at2759"/>
<dbReference type="TreeFam" id="TF315303"/>
<dbReference type="PRO" id="PR:P30547"/>
<dbReference type="Proteomes" id="UP000005447">
    <property type="component" value="Unassembled WGS sequence"/>
</dbReference>
<dbReference type="Bgee" id="ENSCPOG00000036008">
    <property type="expression patterns" value="Expressed in thyroid gland and 5 other cell types or tissues"/>
</dbReference>
<dbReference type="GO" id="GO:0005886">
    <property type="term" value="C:plasma membrane"/>
    <property type="evidence" value="ECO:0007669"/>
    <property type="project" value="UniProtKB-SubCell"/>
</dbReference>
<dbReference type="GO" id="GO:0061827">
    <property type="term" value="C:sperm head"/>
    <property type="evidence" value="ECO:0007669"/>
    <property type="project" value="Ensembl"/>
</dbReference>
<dbReference type="GO" id="GO:0097225">
    <property type="term" value="C:sperm midpiece"/>
    <property type="evidence" value="ECO:0007669"/>
    <property type="project" value="Ensembl"/>
</dbReference>
<dbReference type="GO" id="GO:0016496">
    <property type="term" value="F:substance P receptor activity"/>
    <property type="evidence" value="ECO:0007669"/>
    <property type="project" value="Ensembl"/>
</dbReference>
<dbReference type="GO" id="GO:0007204">
    <property type="term" value="P:positive regulation of cytosolic calcium ion concentration"/>
    <property type="evidence" value="ECO:0007669"/>
    <property type="project" value="Ensembl"/>
</dbReference>
<dbReference type="GO" id="GO:1902093">
    <property type="term" value="P:positive regulation of flagellated sperm motility"/>
    <property type="evidence" value="ECO:0007669"/>
    <property type="project" value="Ensembl"/>
</dbReference>
<dbReference type="GO" id="GO:0070472">
    <property type="term" value="P:regulation of uterine smooth muscle contraction"/>
    <property type="evidence" value="ECO:0007669"/>
    <property type="project" value="Ensembl"/>
</dbReference>
<dbReference type="GO" id="GO:0048265">
    <property type="term" value="P:response to pain"/>
    <property type="evidence" value="ECO:0007669"/>
    <property type="project" value="Ensembl"/>
</dbReference>
<dbReference type="CDD" id="cd16002">
    <property type="entry name" value="7tmA_NK1R"/>
    <property type="match status" value="1"/>
</dbReference>
<dbReference type="FunFam" id="1.20.1070.10:FF:000078">
    <property type="entry name" value="Neuromedin-K receptor"/>
    <property type="match status" value="1"/>
</dbReference>
<dbReference type="Gene3D" id="1.20.1070.10">
    <property type="entry name" value="Rhodopsin 7-helix transmembrane proteins"/>
    <property type="match status" value="1"/>
</dbReference>
<dbReference type="InterPro" id="IPR000276">
    <property type="entry name" value="GPCR_Rhodpsn"/>
</dbReference>
<dbReference type="InterPro" id="IPR017452">
    <property type="entry name" value="GPCR_Rhodpsn_7TM"/>
</dbReference>
<dbReference type="InterPro" id="IPR001681">
    <property type="entry name" value="Neurokn_rcpt"/>
</dbReference>
<dbReference type="InterPro" id="IPR000046">
    <property type="entry name" value="NK1_rcpt"/>
</dbReference>
<dbReference type="PANTHER" id="PTHR46925">
    <property type="entry name" value="G-PROTEIN COUPLED RECEPTOR TKR-1-RELATED"/>
    <property type="match status" value="1"/>
</dbReference>
<dbReference type="PANTHER" id="PTHR46925:SF4">
    <property type="entry name" value="SUBSTANCE-P RECEPTOR"/>
    <property type="match status" value="1"/>
</dbReference>
<dbReference type="Pfam" id="PF00001">
    <property type="entry name" value="7tm_1"/>
    <property type="match status" value="1"/>
</dbReference>
<dbReference type="PRINTS" id="PR00237">
    <property type="entry name" value="GPCRRHODOPSN"/>
</dbReference>
<dbReference type="PRINTS" id="PR01024">
    <property type="entry name" value="NEUROKININ1R"/>
</dbReference>
<dbReference type="PRINTS" id="PR00244">
    <property type="entry name" value="NEUROKININR"/>
</dbReference>
<dbReference type="SUPFAM" id="SSF81321">
    <property type="entry name" value="Family A G protein-coupled receptor-like"/>
    <property type="match status" value="1"/>
</dbReference>
<dbReference type="PROSITE" id="PS00237">
    <property type="entry name" value="G_PROTEIN_RECEP_F1_1"/>
    <property type="match status" value="1"/>
</dbReference>
<dbReference type="PROSITE" id="PS50262">
    <property type="entry name" value="G_PROTEIN_RECEP_F1_2"/>
    <property type="match status" value="1"/>
</dbReference>
<keyword id="KW-1003">Cell membrane</keyword>
<keyword id="KW-1015">Disulfide bond</keyword>
<keyword id="KW-0297">G-protein coupled receptor</keyword>
<keyword id="KW-0325">Glycoprotein</keyword>
<keyword id="KW-0449">Lipoprotein</keyword>
<keyword id="KW-0472">Membrane</keyword>
<keyword id="KW-0564">Palmitate</keyword>
<keyword id="KW-0675">Receptor</keyword>
<keyword id="KW-1185">Reference proteome</keyword>
<keyword id="KW-0807">Transducer</keyword>
<keyword id="KW-0812">Transmembrane</keyword>
<keyword id="KW-1133">Transmembrane helix</keyword>
<reference key="1">
    <citation type="journal article" date="1992" name="Biochim. Biophys. Acta">
        <title>Molecular cloning of substance P receptor cDNA from guinea-pig uterus.</title>
        <authorList>
            <person name="Gorbulev V."/>
            <person name="Akhundova A."/>
            <person name="Luzius H."/>
            <person name="Fahrenholz F."/>
        </authorList>
    </citation>
    <scope>NUCLEOTIDE SEQUENCE [MRNA]</scope>
    <source>
        <tissue>Uterus</tissue>
    </source>
</reference>